<evidence type="ECO:0000255" key="1">
    <source>
        <dbReference type="HAMAP-Rule" id="MF_00096"/>
    </source>
</evidence>
<evidence type="ECO:0000256" key="2">
    <source>
        <dbReference type="SAM" id="MobiDB-lite"/>
    </source>
</evidence>
<sequence length="854" mass="95017">MTASDIQPTEPHTPPTPHADTRLVDRTKLSKMYQHYVEVKDKYPHALLLYRVGDFFETFFQDAVTVARELELVLTSKHGGEVGRVAMTGVPHHAWERYTTQLVEKGYAVVICDQVEDASEAVGLVRREVTRILTPGTLLEEGMLKSSRNNYLAAVVITSNHWGLAYADISTGEFLTTQDSDLERLTQELMRLQPSEVLVPTNAPDLGTLLRPGETSPHLPECLPPSFCYSLRSQQPFSQAEARSTLLQRFKVRSLEGLGCDHLPLAVRAAGGLLEYVEDTQKAGQVSLQRLRTYTITDYLIVDNQTRRNLEITQTVRDGTFHGSLLWALDKTSTAMGSRALRRWLLQPLLDIKGISSRQDTIQELVTNTRLRQDLRHLLRQIYDLERLTGRASSGTANARDLVALADSLSRLPELANLVIDAHSPFLKALQKVPPILEELAQKIHAHLVESPPLHLKEGGLIRPGVNPLLDERKATVEADHQWIANLEVDERARTGIPLLKVGFNETFGYYISISRAKADQVPANYIRKQTLKNEERYITPELKEREARILTARDDLHKLEYEVFVTLREEVGEQAEAIRHLSRAVAAADVLCGLAELAVYQGYCRPEMVNGREIAIIDGRHPVVEQSLPAGFFVPNSTQLGSNEETHQLPDLIILTGPNASGKSCYLRQVGLIQLMAQIGSFVPAKSARLGICDRIFTRVGAVDDLATGQSTFMVEMNETANILNHATSRSLVLLDEIGRGTATFDGLSIAWAVAEYIATEIRSRTIFATHYHELNELAGMLPNVANYQVTVKELPDQIIFLHQVQPGGADKSYGIEAGRLAGLPTVVIQRAKQVMGQIEKHSKIAMGLQNLD</sequence>
<feature type="chain" id="PRO_0000335110" description="DNA mismatch repair protein MutS">
    <location>
        <begin position="1"/>
        <end position="854"/>
    </location>
</feature>
<feature type="region of interest" description="Disordered" evidence="2">
    <location>
        <begin position="1"/>
        <end position="21"/>
    </location>
</feature>
<feature type="binding site" evidence="1">
    <location>
        <begin position="658"/>
        <end position="665"/>
    </location>
    <ligand>
        <name>ATP</name>
        <dbReference type="ChEBI" id="CHEBI:30616"/>
    </ligand>
</feature>
<name>MUTS_TRIV2</name>
<reference key="1">
    <citation type="journal article" date="2014" name="Stand. Genomic Sci.">
        <title>Complete genome sequence of Anabaena variabilis ATCC 29413.</title>
        <authorList>
            <person name="Thiel T."/>
            <person name="Pratte B.S."/>
            <person name="Zhong J."/>
            <person name="Goodwin L."/>
            <person name="Copeland A."/>
            <person name="Lucas S."/>
            <person name="Han C."/>
            <person name="Pitluck S."/>
            <person name="Land M.L."/>
            <person name="Kyrpides N.C."/>
            <person name="Woyke T."/>
        </authorList>
    </citation>
    <scope>NUCLEOTIDE SEQUENCE [LARGE SCALE GENOMIC DNA]</scope>
    <source>
        <strain>ATCC 29413 / PCC 7937</strain>
    </source>
</reference>
<dbReference type="EMBL" id="CP000117">
    <property type="protein sequence ID" value="ABA22794.1"/>
    <property type="molecule type" value="Genomic_DNA"/>
</dbReference>
<dbReference type="SMR" id="Q3M892"/>
<dbReference type="STRING" id="240292.Ava_3186"/>
<dbReference type="KEGG" id="ava:Ava_3186"/>
<dbReference type="eggNOG" id="COG0249">
    <property type="taxonomic scope" value="Bacteria"/>
</dbReference>
<dbReference type="HOGENOM" id="CLU_002472_4_0_3"/>
<dbReference type="Proteomes" id="UP000002533">
    <property type="component" value="Chromosome"/>
</dbReference>
<dbReference type="GO" id="GO:0005829">
    <property type="term" value="C:cytosol"/>
    <property type="evidence" value="ECO:0007669"/>
    <property type="project" value="TreeGrafter"/>
</dbReference>
<dbReference type="GO" id="GO:0005524">
    <property type="term" value="F:ATP binding"/>
    <property type="evidence" value="ECO:0007669"/>
    <property type="project" value="UniProtKB-UniRule"/>
</dbReference>
<dbReference type="GO" id="GO:0140664">
    <property type="term" value="F:ATP-dependent DNA damage sensor activity"/>
    <property type="evidence" value="ECO:0007669"/>
    <property type="project" value="InterPro"/>
</dbReference>
<dbReference type="GO" id="GO:0003684">
    <property type="term" value="F:damaged DNA binding"/>
    <property type="evidence" value="ECO:0007669"/>
    <property type="project" value="UniProtKB-UniRule"/>
</dbReference>
<dbReference type="GO" id="GO:0030983">
    <property type="term" value="F:mismatched DNA binding"/>
    <property type="evidence" value="ECO:0007669"/>
    <property type="project" value="InterPro"/>
</dbReference>
<dbReference type="GO" id="GO:0006298">
    <property type="term" value="P:mismatch repair"/>
    <property type="evidence" value="ECO:0007669"/>
    <property type="project" value="UniProtKB-UniRule"/>
</dbReference>
<dbReference type="CDD" id="cd03284">
    <property type="entry name" value="ABC_MutS1"/>
    <property type="match status" value="1"/>
</dbReference>
<dbReference type="FunFam" id="1.10.1420.10:FF:000001">
    <property type="entry name" value="DNA mismatch repair protein MutS"/>
    <property type="match status" value="1"/>
</dbReference>
<dbReference type="FunFam" id="3.40.50.300:FF:000870">
    <property type="entry name" value="MutS protein homolog 4"/>
    <property type="match status" value="1"/>
</dbReference>
<dbReference type="Gene3D" id="1.10.1420.10">
    <property type="match status" value="2"/>
</dbReference>
<dbReference type="Gene3D" id="3.40.1170.10">
    <property type="entry name" value="DNA repair protein MutS, domain I"/>
    <property type="match status" value="1"/>
</dbReference>
<dbReference type="Gene3D" id="3.30.420.110">
    <property type="entry name" value="MutS, connector domain"/>
    <property type="match status" value="1"/>
</dbReference>
<dbReference type="Gene3D" id="3.40.50.300">
    <property type="entry name" value="P-loop containing nucleotide triphosphate hydrolases"/>
    <property type="match status" value="1"/>
</dbReference>
<dbReference type="HAMAP" id="MF_00096">
    <property type="entry name" value="MutS"/>
    <property type="match status" value="1"/>
</dbReference>
<dbReference type="InterPro" id="IPR005748">
    <property type="entry name" value="DNA_mismatch_repair_MutS"/>
</dbReference>
<dbReference type="InterPro" id="IPR007695">
    <property type="entry name" value="DNA_mismatch_repair_MutS-lik_N"/>
</dbReference>
<dbReference type="InterPro" id="IPR017261">
    <property type="entry name" value="DNA_mismatch_repair_MutS/MSH"/>
</dbReference>
<dbReference type="InterPro" id="IPR000432">
    <property type="entry name" value="DNA_mismatch_repair_MutS_C"/>
</dbReference>
<dbReference type="InterPro" id="IPR007861">
    <property type="entry name" value="DNA_mismatch_repair_MutS_clamp"/>
</dbReference>
<dbReference type="InterPro" id="IPR007696">
    <property type="entry name" value="DNA_mismatch_repair_MutS_core"/>
</dbReference>
<dbReference type="InterPro" id="IPR016151">
    <property type="entry name" value="DNA_mismatch_repair_MutS_N"/>
</dbReference>
<dbReference type="InterPro" id="IPR036187">
    <property type="entry name" value="DNA_mismatch_repair_MutS_sf"/>
</dbReference>
<dbReference type="InterPro" id="IPR007860">
    <property type="entry name" value="DNA_mmatch_repair_MutS_con_dom"/>
</dbReference>
<dbReference type="InterPro" id="IPR045076">
    <property type="entry name" value="MutS"/>
</dbReference>
<dbReference type="InterPro" id="IPR036678">
    <property type="entry name" value="MutS_con_dom_sf"/>
</dbReference>
<dbReference type="InterPro" id="IPR027417">
    <property type="entry name" value="P-loop_NTPase"/>
</dbReference>
<dbReference type="NCBIfam" id="TIGR01070">
    <property type="entry name" value="mutS1"/>
    <property type="match status" value="1"/>
</dbReference>
<dbReference type="NCBIfam" id="NF003810">
    <property type="entry name" value="PRK05399.1"/>
    <property type="match status" value="1"/>
</dbReference>
<dbReference type="PANTHER" id="PTHR11361:SF34">
    <property type="entry name" value="DNA MISMATCH REPAIR PROTEIN MSH1, MITOCHONDRIAL"/>
    <property type="match status" value="1"/>
</dbReference>
<dbReference type="PANTHER" id="PTHR11361">
    <property type="entry name" value="DNA MISMATCH REPAIR PROTEIN MUTS FAMILY MEMBER"/>
    <property type="match status" value="1"/>
</dbReference>
<dbReference type="Pfam" id="PF01624">
    <property type="entry name" value="MutS_I"/>
    <property type="match status" value="1"/>
</dbReference>
<dbReference type="Pfam" id="PF05188">
    <property type="entry name" value="MutS_II"/>
    <property type="match status" value="1"/>
</dbReference>
<dbReference type="Pfam" id="PF05192">
    <property type="entry name" value="MutS_III"/>
    <property type="match status" value="1"/>
</dbReference>
<dbReference type="Pfam" id="PF05190">
    <property type="entry name" value="MutS_IV"/>
    <property type="match status" value="1"/>
</dbReference>
<dbReference type="Pfam" id="PF00488">
    <property type="entry name" value="MutS_V"/>
    <property type="match status" value="1"/>
</dbReference>
<dbReference type="PIRSF" id="PIRSF037677">
    <property type="entry name" value="DNA_mis_repair_Msh6"/>
    <property type="match status" value="1"/>
</dbReference>
<dbReference type="SMART" id="SM00534">
    <property type="entry name" value="MUTSac"/>
    <property type="match status" value="1"/>
</dbReference>
<dbReference type="SMART" id="SM00533">
    <property type="entry name" value="MUTSd"/>
    <property type="match status" value="1"/>
</dbReference>
<dbReference type="SUPFAM" id="SSF55271">
    <property type="entry name" value="DNA repair protein MutS, domain I"/>
    <property type="match status" value="1"/>
</dbReference>
<dbReference type="SUPFAM" id="SSF53150">
    <property type="entry name" value="DNA repair protein MutS, domain II"/>
    <property type="match status" value="1"/>
</dbReference>
<dbReference type="SUPFAM" id="SSF48334">
    <property type="entry name" value="DNA repair protein MutS, domain III"/>
    <property type="match status" value="1"/>
</dbReference>
<dbReference type="SUPFAM" id="SSF52540">
    <property type="entry name" value="P-loop containing nucleoside triphosphate hydrolases"/>
    <property type="match status" value="1"/>
</dbReference>
<dbReference type="PROSITE" id="PS00486">
    <property type="entry name" value="DNA_MISMATCH_REPAIR_2"/>
    <property type="match status" value="1"/>
</dbReference>
<comment type="function">
    <text evidence="1">This protein is involved in the repair of mismatches in DNA. It is possible that it carries out the mismatch recognition step. This protein has a weak ATPase activity.</text>
</comment>
<comment type="similarity">
    <text evidence="1">Belongs to the DNA mismatch repair MutS family.</text>
</comment>
<keyword id="KW-0067">ATP-binding</keyword>
<keyword id="KW-0227">DNA damage</keyword>
<keyword id="KW-0234">DNA repair</keyword>
<keyword id="KW-0238">DNA-binding</keyword>
<keyword id="KW-0547">Nucleotide-binding</keyword>
<gene>
    <name evidence="1" type="primary">mutS</name>
    <name type="ordered locus">Ava_3186</name>
</gene>
<organism>
    <name type="scientific">Trichormus variabilis (strain ATCC 29413 / PCC 7937)</name>
    <name type="common">Anabaena variabilis</name>
    <dbReference type="NCBI Taxonomy" id="240292"/>
    <lineage>
        <taxon>Bacteria</taxon>
        <taxon>Bacillati</taxon>
        <taxon>Cyanobacteriota</taxon>
        <taxon>Cyanophyceae</taxon>
        <taxon>Nostocales</taxon>
        <taxon>Nostocaceae</taxon>
        <taxon>Trichormus</taxon>
    </lineage>
</organism>
<proteinExistence type="inferred from homology"/>
<accession>Q3M892</accession>
<protein>
    <recommendedName>
        <fullName evidence="1">DNA mismatch repair protein MutS</fullName>
    </recommendedName>
</protein>